<feature type="chain" id="PRO_1000067359" description="Anhydro-N-acetylmuramic acid kinase">
    <location>
        <begin position="1"/>
        <end position="369"/>
    </location>
</feature>
<feature type="binding site" evidence="1">
    <location>
        <begin position="12"/>
        <end position="19"/>
    </location>
    <ligand>
        <name>ATP</name>
        <dbReference type="ChEBI" id="CHEBI:30616"/>
    </ligand>
</feature>
<accession>A3D1S4</accession>
<keyword id="KW-0067">ATP-binding</keyword>
<keyword id="KW-0119">Carbohydrate metabolism</keyword>
<keyword id="KW-0418">Kinase</keyword>
<keyword id="KW-0547">Nucleotide-binding</keyword>
<keyword id="KW-1185">Reference proteome</keyword>
<keyword id="KW-0808">Transferase</keyword>
<name>ANMK_SHEB5</name>
<protein>
    <recommendedName>
        <fullName evidence="1">Anhydro-N-acetylmuramic acid kinase</fullName>
        <ecNumber evidence="1">2.7.1.170</ecNumber>
    </recommendedName>
    <alternativeName>
        <fullName evidence="1">AnhMurNAc kinase</fullName>
    </alternativeName>
</protein>
<sequence length="369" mass="39838">MKNAYYIGLMSGTSMDGVDAVLVDFSGAQPQLITSHTEAIPSHLLKGLQRLCSPSTDEINRLGRLDRNVGELFALAVNNLLTKCAIAKEDVIAIGSHGQTVRHMPNLEVGFTLQIGDPNTIATETGIDVIADFRRKDIALGGQGAPLVPAFHQQTFAEVGKKRIILNIGGIANITYLPGNSDQVLGFDTGPGNTLIDAWIQQVKSEPFDRDGAWAESGKTDQDLLTQLLSHPYFSLAYPKSTGRELFNQAWLEQQLSPFNHLDEEDIQSTLLDLTCHSIARDMIKLSNEGELYVCGGGAFNGQLMQRLAALLPGYTLNTTSALGVDPKWAEGIAFAWLAMRNHLGLPANLPAVTGASREAVLGGRFSAK</sequence>
<reference key="1">
    <citation type="submission" date="2007-02" db="EMBL/GenBank/DDBJ databases">
        <title>Complete sequence of chromosome of Shewanella baltica OS155.</title>
        <authorList>
            <consortium name="US DOE Joint Genome Institute"/>
            <person name="Copeland A."/>
            <person name="Lucas S."/>
            <person name="Lapidus A."/>
            <person name="Barry K."/>
            <person name="Detter J.C."/>
            <person name="Glavina del Rio T."/>
            <person name="Hammon N."/>
            <person name="Israni S."/>
            <person name="Dalin E."/>
            <person name="Tice H."/>
            <person name="Pitluck S."/>
            <person name="Sims D.R."/>
            <person name="Brettin T."/>
            <person name="Bruce D."/>
            <person name="Han C."/>
            <person name="Tapia R."/>
            <person name="Brainard J."/>
            <person name="Schmutz J."/>
            <person name="Larimer F."/>
            <person name="Land M."/>
            <person name="Hauser L."/>
            <person name="Kyrpides N."/>
            <person name="Mikhailova N."/>
            <person name="Brettar I."/>
            <person name="Klappenbach J."/>
            <person name="Konstantinidis K."/>
            <person name="Rodrigues J."/>
            <person name="Tiedje J."/>
            <person name="Richardson P."/>
        </authorList>
    </citation>
    <scope>NUCLEOTIDE SEQUENCE [LARGE SCALE GENOMIC DNA]</scope>
    <source>
        <strain>OS155 / ATCC BAA-1091</strain>
    </source>
</reference>
<comment type="function">
    <text evidence="1">Catalyzes the specific phosphorylation of 1,6-anhydro-N-acetylmuramic acid (anhMurNAc) with the simultaneous cleavage of the 1,6-anhydro ring, generating MurNAc-6-P. Is required for the utilization of anhMurNAc either imported from the medium or derived from its own cell wall murein, and thus plays a role in cell wall recycling.</text>
</comment>
<comment type="catalytic activity">
    <reaction evidence="1">
        <text>1,6-anhydro-N-acetyl-beta-muramate + ATP + H2O = N-acetyl-D-muramate 6-phosphate + ADP + H(+)</text>
        <dbReference type="Rhea" id="RHEA:24952"/>
        <dbReference type="ChEBI" id="CHEBI:15377"/>
        <dbReference type="ChEBI" id="CHEBI:15378"/>
        <dbReference type="ChEBI" id="CHEBI:30616"/>
        <dbReference type="ChEBI" id="CHEBI:58690"/>
        <dbReference type="ChEBI" id="CHEBI:58722"/>
        <dbReference type="ChEBI" id="CHEBI:456216"/>
        <dbReference type="EC" id="2.7.1.170"/>
    </reaction>
</comment>
<comment type="pathway">
    <text evidence="1">Amino-sugar metabolism; 1,6-anhydro-N-acetylmuramate degradation.</text>
</comment>
<comment type="pathway">
    <text evidence="1">Cell wall biogenesis; peptidoglycan recycling.</text>
</comment>
<comment type="similarity">
    <text evidence="1">Belongs to the anhydro-N-acetylmuramic acid kinase family.</text>
</comment>
<evidence type="ECO:0000255" key="1">
    <source>
        <dbReference type="HAMAP-Rule" id="MF_01270"/>
    </source>
</evidence>
<organism>
    <name type="scientific">Shewanella baltica (strain OS155 / ATCC BAA-1091)</name>
    <dbReference type="NCBI Taxonomy" id="325240"/>
    <lineage>
        <taxon>Bacteria</taxon>
        <taxon>Pseudomonadati</taxon>
        <taxon>Pseudomonadota</taxon>
        <taxon>Gammaproteobacteria</taxon>
        <taxon>Alteromonadales</taxon>
        <taxon>Shewanellaceae</taxon>
        <taxon>Shewanella</taxon>
    </lineage>
</organism>
<gene>
    <name evidence="1" type="primary">anmK</name>
    <name type="ordered locus">Sbal_1168</name>
</gene>
<proteinExistence type="inferred from homology"/>
<dbReference type="EC" id="2.7.1.170" evidence="1"/>
<dbReference type="EMBL" id="CP000563">
    <property type="protein sequence ID" value="ABN60687.1"/>
    <property type="molecule type" value="Genomic_DNA"/>
</dbReference>
<dbReference type="RefSeq" id="WP_011846152.1">
    <property type="nucleotide sequence ID" value="NC_009052.1"/>
</dbReference>
<dbReference type="SMR" id="A3D1S4"/>
<dbReference type="STRING" id="325240.Sbal_1168"/>
<dbReference type="KEGG" id="sbl:Sbal_1168"/>
<dbReference type="HOGENOM" id="CLU_038782_0_0_6"/>
<dbReference type="OrthoDB" id="9763949at2"/>
<dbReference type="UniPathway" id="UPA00343"/>
<dbReference type="UniPathway" id="UPA00544"/>
<dbReference type="Proteomes" id="UP000001557">
    <property type="component" value="Chromosome"/>
</dbReference>
<dbReference type="GO" id="GO:0005524">
    <property type="term" value="F:ATP binding"/>
    <property type="evidence" value="ECO:0007669"/>
    <property type="project" value="UniProtKB-UniRule"/>
</dbReference>
<dbReference type="GO" id="GO:0016301">
    <property type="term" value="F:kinase activity"/>
    <property type="evidence" value="ECO:0007669"/>
    <property type="project" value="UniProtKB-KW"/>
</dbReference>
<dbReference type="GO" id="GO:0016773">
    <property type="term" value="F:phosphotransferase activity, alcohol group as acceptor"/>
    <property type="evidence" value="ECO:0007669"/>
    <property type="project" value="UniProtKB-UniRule"/>
</dbReference>
<dbReference type="GO" id="GO:0097175">
    <property type="term" value="P:1,6-anhydro-N-acetyl-beta-muramic acid catabolic process"/>
    <property type="evidence" value="ECO:0007669"/>
    <property type="project" value="UniProtKB-UniRule"/>
</dbReference>
<dbReference type="GO" id="GO:0006040">
    <property type="term" value="P:amino sugar metabolic process"/>
    <property type="evidence" value="ECO:0007669"/>
    <property type="project" value="InterPro"/>
</dbReference>
<dbReference type="GO" id="GO:0009254">
    <property type="term" value="P:peptidoglycan turnover"/>
    <property type="evidence" value="ECO:0007669"/>
    <property type="project" value="UniProtKB-UniRule"/>
</dbReference>
<dbReference type="CDD" id="cd24050">
    <property type="entry name" value="ASKHA_NBD_ANMK"/>
    <property type="match status" value="1"/>
</dbReference>
<dbReference type="Gene3D" id="3.30.420.40">
    <property type="match status" value="2"/>
</dbReference>
<dbReference type="HAMAP" id="MF_01270">
    <property type="entry name" value="AnhMurNAc_kinase"/>
    <property type="match status" value="1"/>
</dbReference>
<dbReference type="InterPro" id="IPR005338">
    <property type="entry name" value="Anhydro_N_Ac-Mur_kinase"/>
</dbReference>
<dbReference type="InterPro" id="IPR043129">
    <property type="entry name" value="ATPase_NBD"/>
</dbReference>
<dbReference type="NCBIfam" id="NF007139">
    <property type="entry name" value="PRK09585.1-3"/>
    <property type="match status" value="1"/>
</dbReference>
<dbReference type="NCBIfam" id="NF007148">
    <property type="entry name" value="PRK09585.3-2"/>
    <property type="match status" value="1"/>
</dbReference>
<dbReference type="PANTHER" id="PTHR30605">
    <property type="entry name" value="ANHYDRO-N-ACETYLMURAMIC ACID KINASE"/>
    <property type="match status" value="1"/>
</dbReference>
<dbReference type="PANTHER" id="PTHR30605:SF0">
    <property type="entry name" value="ANHYDRO-N-ACETYLMURAMIC ACID KINASE"/>
    <property type="match status" value="1"/>
</dbReference>
<dbReference type="Pfam" id="PF03702">
    <property type="entry name" value="AnmK"/>
    <property type="match status" value="1"/>
</dbReference>
<dbReference type="SUPFAM" id="SSF53067">
    <property type="entry name" value="Actin-like ATPase domain"/>
    <property type="match status" value="1"/>
</dbReference>